<feature type="chain" id="PRO_0000281918" description="Adenylyltransferase and sulfurtransferase MOCS3">
    <location>
        <begin position="1"/>
        <end position="460"/>
    </location>
</feature>
<feature type="domain" description="Rhodanese" evidence="2">
    <location>
        <begin position="347"/>
        <end position="458"/>
    </location>
</feature>
<feature type="region of interest" description="Interaction with NFS1" evidence="1">
    <location>
        <begin position="158"/>
        <end position="238"/>
    </location>
</feature>
<feature type="active site" description="Glycyl thioester intermediate; for adenylyltransferase activity" evidence="2">
    <location>
        <position position="239"/>
    </location>
</feature>
<feature type="active site" description="Cysteine persulfide intermediate; for sulfurtransferase activity" evidence="2">
    <location>
        <position position="412"/>
    </location>
</feature>
<feature type="binding site" evidence="2">
    <location>
        <position position="92"/>
    </location>
    <ligand>
        <name>ATP</name>
        <dbReference type="ChEBI" id="CHEBI:30616"/>
    </ligand>
</feature>
<feature type="binding site" evidence="2">
    <location>
        <position position="113"/>
    </location>
    <ligand>
        <name>ATP</name>
        <dbReference type="ChEBI" id="CHEBI:30616"/>
    </ligand>
</feature>
<feature type="binding site" evidence="2">
    <location>
        <begin position="120"/>
        <end position="124"/>
    </location>
    <ligand>
        <name>ATP</name>
        <dbReference type="ChEBI" id="CHEBI:30616"/>
    </ligand>
</feature>
<feature type="binding site" evidence="2">
    <location>
        <position position="137"/>
    </location>
    <ligand>
        <name>ATP</name>
        <dbReference type="ChEBI" id="CHEBI:30616"/>
    </ligand>
</feature>
<feature type="binding site" evidence="2">
    <location>
        <begin position="181"/>
        <end position="182"/>
    </location>
    <ligand>
        <name>ATP</name>
        <dbReference type="ChEBI" id="CHEBI:30616"/>
    </ligand>
</feature>
<feature type="binding site" evidence="2">
    <location>
        <position position="222"/>
    </location>
    <ligand>
        <name>Zn(2+)</name>
        <dbReference type="ChEBI" id="CHEBI:29105"/>
    </ligand>
</feature>
<feature type="binding site" evidence="2">
    <location>
        <position position="225"/>
    </location>
    <ligand>
        <name>Zn(2+)</name>
        <dbReference type="ChEBI" id="CHEBI:29105"/>
    </ligand>
</feature>
<feature type="binding site" evidence="2">
    <location>
        <position position="297"/>
    </location>
    <ligand>
        <name>Zn(2+)</name>
        <dbReference type="ChEBI" id="CHEBI:29105"/>
    </ligand>
</feature>
<feature type="binding site" evidence="2">
    <location>
        <position position="300"/>
    </location>
    <ligand>
        <name>Zn(2+)</name>
        <dbReference type="ChEBI" id="CHEBI:29105"/>
    </ligand>
</feature>
<feature type="modified residue" description="Cysteine persulfide" evidence="1">
    <location>
        <position position="412"/>
    </location>
</feature>
<feature type="disulfide bond" evidence="2">
    <location>
        <begin position="316"/>
        <end position="324"/>
    </location>
</feature>
<comment type="function">
    <text evidence="2">Plays a central role in 2-thiolation of mcm(5)S(2)U at tRNA wobble positions of cytosolic tRNA(Lys), tRNA(Glu) and tRNA(Gln). Also essential during biosynthesis of the molybdenum cofactor. Acts by mediating the C-terminal thiocarboxylation of sulfur carriers URM1 and MOCS2A. Its N-terminus first activates URM1 and MOCS2A as acyl-adenylates (-COAMP), then the persulfide sulfur on the catalytic cysteine is transferred to URM1 and MOCS2A to form thiocarboxylation (-COSH) of their C-terminus. The reaction probably involves hydrogen sulfide that is generated from the persulfide intermediate and that acts as a nucleophile towards URM1 and MOCS2A. Subsequently, a transient disulfide bond is formed. Does not use thiosulfate as sulfur donor; NFS1 acting as a sulfur donor for thiocarboxylation reactions.</text>
</comment>
<comment type="catalytic activity">
    <reaction evidence="2">
        <text>[molybdopterin-synthase sulfur-carrier protein]-C-terminal Gly-Gly + ATP + H(+) = [molybdopterin-synthase sulfur-carrier protein]-C-terminal Gly-Gly-AMP + diphosphate</text>
        <dbReference type="Rhea" id="RHEA:43616"/>
        <dbReference type="Rhea" id="RHEA-COMP:12159"/>
        <dbReference type="Rhea" id="RHEA-COMP:12202"/>
        <dbReference type="ChEBI" id="CHEBI:15378"/>
        <dbReference type="ChEBI" id="CHEBI:30616"/>
        <dbReference type="ChEBI" id="CHEBI:33019"/>
        <dbReference type="ChEBI" id="CHEBI:90618"/>
        <dbReference type="ChEBI" id="CHEBI:90778"/>
        <dbReference type="EC" id="2.7.7.80"/>
    </reaction>
</comment>
<comment type="catalytic activity">
    <reaction evidence="2">
        <text>[molybdopterin-synthase sulfur-carrier protein]-C-terminal Gly-Gly-AMP + S-sulfanyl-L-cysteinyl-[cysteine desulfurase] + AH2 = [molybdopterin-synthase sulfur-carrier protein]-C-terminal-Gly-aminoethanethioate + L-cysteinyl-[cysteine desulfurase] + A + AMP + 2 H(+)</text>
        <dbReference type="Rhea" id="RHEA:48612"/>
        <dbReference type="Rhea" id="RHEA-COMP:12157"/>
        <dbReference type="Rhea" id="RHEA-COMP:12158"/>
        <dbReference type="Rhea" id="RHEA-COMP:12159"/>
        <dbReference type="Rhea" id="RHEA-COMP:19907"/>
        <dbReference type="ChEBI" id="CHEBI:13193"/>
        <dbReference type="ChEBI" id="CHEBI:15378"/>
        <dbReference type="ChEBI" id="CHEBI:17499"/>
        <dbReference type="ChEBI" id="CHEBI:29950"/>
        <dbReference type="ChEBI" id="CHEBI:61963"/>
        <dbReference type="ChEBI" id="CHEBI:90618"/>
        <dbReference type="ChEBI" id="CHEBI:232372"/>
        <dbReference type="ChEBI" id="CHEBI:456215"/>
        <dbReference type="EC" id="2.8.1.11"/>
    </reaction>
</comment>
<comment type="cofactor">
    <cofactor evidence="2">
        <name>Zn(2+)</name>
        <dbReference type="ChEBI" id="CHEBI:29105"/>
    </cofactor>
    <text evidence="2">Binds 1 zinc ion per subunit.</text>
</comment>
<comment type="pathway">
    <text evidence="2">tRNA modification; 5-methoxycarbonylmethyl-2-thiouridine-tRNA biosynthesis.</text>
</comment>
<comment type="pathway">
    <text evidence="2">Cofactor biosynthesis; molybdopterin biosynthesis.</text>
</comment>
<comment type="subunit">
    <text>Interacts with NFS1.</text>
</comment>
<comment type="subcellular location">
    <subcellularLocation>
        <location evidence="1">Cytoplasm</location>
        <location evidence="1">Cytosol</location>
    </subcellularLocation>
</comment>
<comment type="similarity">
    <text evidence="2">In the N-terminal section; belongs to the HesA/MoeB/ThiF family. UBA4 subfamily.</text>
</comment>
<evidence type="ECO:0000250" key="1">
    <source>
        <dbReference type="UniProtKB" id="O95396"/>
    </source>
</evidence>
<evidence type="ECO:0000255" key="2">
    <source>
        <dbReference type="HAMAP-Rule" id="MF_03049"/>
    </source>
</evidence>
<reference key="1">
    <citation type="journal article" date="2009" name="PLoS Biol.">
        <title>Lineage-specific biology revealed by a finished genome assembly of the mouse.</title>
        <authorList>
            <person name="Church D.M."/>
            <person name="Goodstadt L."/>
            <person name="Hillier L.W."/>
            <person name="Zody M.C."/>
            <person name="Goldstein S."/>
            <person name="She X."/>
            <person name="Bult C.J."/>
            <person name="Agarwala R."/>
            <person name="Cherry J.L."/>
            <person name="DiCuccio M."/>
            <person name="Hlavina W."/>
            <person name="Kapustin Y."/>
            <person name="Meric P."/>
            <person name="Maglott D."/>
            <person name="Birtle Z."/>
            <person name="Marques A.C."/>
            <person name="Graves T."/>
            <person name="Zhou S."/>
            <person name="Teague B."/>
            <person name="Potamousis K."/>
            <person name="Churas C."/>
            <person name="Place M."/>
            <person name="Herschleb J."/>
            <person name="Runnheim R."/>
            <person name="Forrest D."/>
            <person name="Amos-Landgraf J."/>
            <person name="Schwartz D.C."/>
            <person name="Cheng Z."/>
            <person name="Lindblad-Toh K."/>
            <person name="Eichler E.E."/>
            <person name="Ponting C.P."/>
        </authorList>
    </citation>
    <scope>NUCLEOTIDE SEQUENCE [LARGE SCALE GENOMIC DNA]</scope>
    <source>
        <strain>C57BL/6J</strain>
    </source>
</reference>
<reference key="2">
    <citation type="journal article" date="2010" name="Cell">
        <title>A tissue-specific atlas of mouse protein phosphorylation and expression.</title>
        <authorList>
            <person name="Huttlin E.L."/>
            <person name="Jedrychowski M.P."/>
            <person name="Elias J.E."/>
            <person name="Goswami T."/>
            <person name="Rad R."/>
            <person name="Beausoleil S.A."/>
            <person name="Villen J."/>
            <person name="Haas W."/>
            <person name="Sowa M.E."/>
            <person name="Gygi S.P."/>
        </authorList>
    </citation>
    <scope>IDENTIFICATION BY MASS SPECTROMETRY [LARGE SCALE ANALYSIS]</scope>
    <source>
        <tissue>Liver</tissue>
        <tissue>Spleen</tissue>
        <tissue>Testis</tissue>
    </source>
</reference>
<organism>
    <name type="scientific">Mus musculus</name>
    <name type="common">Mouse</name>
    <dbReference type="NCBI Taxonomy" id="10090"/>
    <lineage>
        <taxon>Eukaryota</taxon>
        <taxon>Metazoa</taxon>
        <taxon>Chordata</taxon>
        <taxon>Craniata</taxon>
        <taxon>Vertebrata</taxon>
        <taxon>Euteleostomi</taxon>
        <taxon>Mammalia</taxon>
        <taxon>Eutheria</taxon>
        <taxon>Euarchontoglires</taxon>
        <taxon>Glires</taxon>
        <taxon>Rodentia</taxon>
        <taxon>Myomorpha</taxon>
        <taxon>Muroidea</taxon>
        <taxon>Muridae</taxon>
        <taxon>Murinae</taxon>
        <taxon>Mus</taxon>
        <taxon>Mus</taxon>
    </lineage>
</organism>
<proteinExistence type="evidence at protein level"/>
<accession>A2BDX3</accession>
<keyword id="KW-0067">ATP-binding</keyword>
<keyword id="KW-0963">Cytoplasm</keyword>
<keyword id="KW-1015">Disulfide bond</keyword>
<keyword id="KW-0479">Metal-binding</keyword>
<keyword id="KW-0501">Molybdenum cofactor biosynthesis</keyword>
<keyword id="KW-0511">Multifunctional enzyme</keyword>
<keyword id="KW-0547">Nucleotide-binding</keyword>
<keyword id="KW-0548">Nucleotidyltransferase</keyword>
<keyword id="KW-1185">Reference proteome</keyword>
<keyword id="KW-0808">Transferase</keyword>
<keyword id="KW-0819">tRNA processing</keyword>
<keyword id="KW-0862">Zinc</keyword>
<sequence length="460" mass="49375">MAAPEDVAALQAEITRREEELASLKRRLAAALTAEPEPERPLRVPPPPLAPRAALSRDEILRYSRQLLLPELGVRGQLRLAAAAVLVVGCGGLGCPLAQYLAAAGVGRLGLVDHDVVETSNLARQVLHGEAQAGESKARSAAAALRRLNSAVECVAYPRALAEDWALDLVRGYDVVADCCDNVPTRYLVNDACVLAGRPLVSASALRFEGQMTVYHHDGGPCYRCVFPRPPPPETVTNCADGGVLGAVPGVLGCAQALEVLKIAAGLGSSYSGSMLLFDGLGGHFRRIRLRRRRPDCVVCGQQPTVTRLQDYEAFCGSSATDKCRALKLLCPEERISVTDYKRLLDSGAPHVLLDVRPQVEVDICRLPHSLHIPLSQLERRDADSLKLLGAALRKGKQESQEGVALPVYVICKLGNDSQKAVKVLQSLTAVPELDSLTVQDIVGGLMAWAAKIDGTFPQY</sequence>
<protein>
    <recommendedName>
        <fullName evidence="2">Adenylyltransferase and sulfurtransferase MOCS3</fullName>
    </recommendedName>
    <alternativeName>
        <fullName evidence="2">Molybdenum cofactor synthesis protein 3</fullName>
    </alternativeName>
    <domain>
        <recommendedName>
            <fullName evidence="2">Molybdopterin-synthase adenylyltransferase</fullName>
            <ecNumber evidence="2">2.7.7.80</ecNumber>
        </recommendedName>
        <alternativeName>
            <fullName evidence="2">Adenylyltransferase MOCS3</fullName>
        </alternativeName>
        <alternativeName>
            <fullName evidence="2">Sulfur carrier protein MOCS2A adenylyltransferase</fullName>
        </alternativeName>
    </domain>
    <domain>
        <recommendedName>
            <fullName evidence="2">Molybdopterin-synthase sulfurtransferase</fullName>
            <ecNumber evidence="2">2.8.1.11</ecNumber>
        </recommendedName>
        <alternativeName>
            <fullName evidence="2">Sulfur carrier protein MOCS2A sulfurtransferase</fullName>
        </alternativeName>
        <alternativeName>
            <fullName evidence="2">Sulfurtransferase MOCS3</fullName>
        </alternativeName>
    </domain>
</protein>
<name>MOCS3_MOUSE</name>
<gene>
    <name type="primary">Mocs3</name>
    <name type="synonym">Uba4</name>
</gene>
<dbReference type="EC" id="2.7.7.80" evidence="2"/>
<dbReference type="EC" id="2.8.1.11" evidence="2"/>
<dbReference type="EMBL" id="BX005039">
    <property type="status" value="NOT_ANNOTATED_CDS"/>
    <property type="molecule type" value="Genomic_DNA"/>
</dbReference>
<dbReference type="CCDS" id="CCDS50802.1"/>
<dbReference type="RefSeq" id="NP_001153802.1">
    <property type="nucleotide sequence ID" value="NM_001160330.1"/>
</dbReference>
<dbReference type="SMR" id="A2BDX3"/>
<dbReference type="FunCoup" id="A2BDX3">
    <property type="interactions" value="1362"/>
</dbReference>
<dbReference type="IntAct" id="A2BDX3">
    <property type="interactions" value="1"/>
</dbReference>
<dbReference type="STRING" id="10090.ENSMUSP00000096670"/>
<dbReference type="iPTMnet" id="A2BDX3"/>
<dbReference type="PhosphoSitePlus" id="A2BDX3"/>
<dbReference type="SwissPalm" id="A2BDX3"/>
<dbReference type="jPOST" id="A2BDX3"/>
<dbReference type="PaxDb" id="10090-ENSMUSP00000096670"/>
<dbReference type="PeptideAtlas" id="A2BDX3"/>
<dbReference type="ProteomicsDB" id="290289"/>
<dbReference type="Pumba" id="A2BDX3"/>
<dbReference type="Antibodypedia" id="28627">
    <property type="antibodies" value="184 antibodies from 24 providers"/>
</dbReference>
<dbReference type="Ensembl" id="ENSMUST00000099071.5">
    <property type="protein sequence ID" value="ENSMUSP00000096670.4"/>
    <property type="gene ID" value="ENSMUSG00000074576.5"/>
</dbReference>
<dbReference type="GeneID" id="69372"/>
<dbReference type="KEGG" id="mmu:69372"/>
<dbReference type="UCSC" id="uc012cjs.1">
    <property type="organism name" value="mouse"/>
</dbReference>
<dbReference type="AGR" id="MGI:1916622"/>
<dbReference type="CTD" id="27304"/>
<dbReference type="MGI" id="MGI:1916622">
    <property type="gene designation" value="Mocs3"/>
</dbReference>
<dbReference type="VEuPathDB" id="HostDB:ENSMUSG00000074576"/>
<dbReference type="eggNOG" id="KOG2017">
    <property type="taxonomic scope" value="Eukaryota"/>
</dbReference>
<dbReference type="GeneTree" id="ENSGT00940000160847"/>
<dbReference type="HOGENOM" id="CLU_013325_1_2_1"/>
<dbReference type="InParanoid" id="A2BDX3"/>
<dbReference type="OMA" id="IPDVGMD"/>
<dbReference type="OrthoDB" id="10261062at2759"/>
<dbReference type="PhylomeDB" id="A2BDX3"/>
<dbReference type="TreeFam" id="TF106103"/>
<dbReference type="Reactome" id="R-MMU-947581">
    <property type="pathway name" value="Molybdenum cofactor biosynthesis"/>
</dbReference>
<dbReference type="UniPathway" id="UPA00344"/>
<dbReference type="UniPathway" id="UPA00988"/>
<dbReference type="BioGRID-ORCS" id="69372">
    <property type="hits" value="26 hits in 77 CRISPR screens"/>
</dbReference>
<dbReference type="ChiTaRS" id="Mocs3">
    <property type="organism name" value="mouse"/>
</dbReference>
<dbReference type="PRO" id="PR:A2BDX3"/>
<dbReference type="Proteomes" id="UP000000589">
    <property type="component" value="Chromosome 2"/>
</dbReference>
<dbReference type="RNAct" id="A2BDX3">
    <property type="molecule type" value="protein"/>
</dbReference>
<dbReference type="Bgee" id="ENSMUSG00000074576">
    <property type="expression patterns" value="Expressed in seminiferous tubule of testis and 204 other cell types or tissues"/>
</dbReference>
<dbReference type="GO" id="GO:0005829">
    <property type="term" value="C:cytosol"/>
    <property type="evidence" value="ECO:0000250"/>
    <property type="project" value="UniProtKB"/>
</dbReference>
<dbReference type="GO" id="GO:0005524">
    <property type="term" value="F:ATP binding"/>
    <property type="evidence" value="ECO:0007669"/>
    <property type="project" value="UniProtKB-KW"/>
</dbReference>
<dbReference type="GO" id="GO:0046872">
    <property type="term" value="F:metal ion binding"/>
    <property type="evidence" value="ECO:0007669"/>
    <property type="project" value="UniProtKB-KW"/>
</dbReference>
<dbReference type="GO" id="GO:0061605">
    <property type="term" value="F:molybdopterin-synthase adenylyltransferase activity"/>
    <property type="evidence" value="ECO:0007669"/>
    <property type="project" value="UniProtKB-EC"/>
</dbReference>
<dbReference type="GO" id="GO:0061604">
    <property type="term" value="F:molybdopterin-synthase sulfurtransferase activity"/>
    <property type="evidence" value="ECO:0000250"/>
    <property type="project" value="UniProtKB"/>
</dbReference>
<dbReference type="GO" id="GO:0016779">
    <property type="term" value="F:nucleotidyltransferase activity"/>
    <property type="evidence" value="ECO:0000250"/>
    <property type="project" value="UniProtKB"/>
</dbReference>
<dbReference type="GO" id="GO:0016783">
    <property type="term" value="F:sulfurtransferase activity"/>
    <property type="evidence" value="ECO:0000250"/>
    <property type="project" value="UniProtKB"/>
</dbReference>
<dbReference type="GO" id="GO:0042292">
    <property type="term" value="F:URM1 activating enzyme activity"/>
    <property type="evidence" value="ECO:0000250"/>
    <property type="project" value="UniProtKB"/>
</dbReference>
<dbReference type="GO" id="GO:0006777">
    <property type="term" value="P:Mo-molybdopterin cofactor biosynthetic process"/>
    <property type="evidence" value="ECO:0000250"/>
    <property type="project" value="UniProtKB"/>
</dbReference>
<dbReference type="GO" id="GO:0032324">
    <property type="term" value="P:molybdopterin cofactor biosynthetic process"/>
    <property type="evidence" value="ECO:0000266"/>
    <property type="project" value="MGI"/>
</dbReference>
<dbReference type="GO" id="GO:0034227">
    <property type="term" value="P:tRNA thio-modification"/>
    <property type="evidence" value="ECO:0000250"/>
    <property type="project" value="UniProtKB"/>
</dbReference>
<dbReference type="GO" id="GO:0002143">
    <property type="term" value="P:tRNA wobble position uridine thiolation"/>
    <property type="evidence" value="ECO:0007669"/>
    <property type="project" value="InterPro"/>
</dbReference>
<dbReference type="GO" id="GO:0002098">
    <property type="term" value="P:tRNA wobble uridine modification"/>
    <property type="evidence" value="ECO:0000250"/>
    <property type="project" value="UniProtKB"/>
</dbReference>
<dbReference type="CDD" id="cd01526">
    <property type="entry name" value="RHOD_ThiF"/>
    <property type="match status" value="1"/>
</dbReference>
<dbReference type="CDD" id="cd00757">
    <property type="entry name" value="ThiF_MoeB_HesA_family"/>
    <property type="match status" value="1"/>
</dbReference>
<dbReference type="FunFam" id="3.40.250.10:FF:000014">
    <property type="entry name" value="Adenylyltransferase and sulfurtransferase MOCS3"/>
    <property type="match status" value="1"/>
</dbReference>
<dbReference type="FunFam" id="3.40.50.720:FF:000206">
    <property type="entry name" value="Adenylyltransferase and sulfurtransferase MOCS3"/>
    <property type="match status" value="1"/>
</dbReference>
<dbReference type="Gene3D" id="3.40.50.720">
    <property type="entry name" value="NAD(P)-binding Rossmann-like Domain"/>
    <property type="match status" value="1"/>
</dbReference>
<dbReference type="Gene3D" id="3.40.250.10">
    <property type="entry name" value="Rhodanese-like domain"/>
    <property type="match status" value="1"/>
</dbReference>
<dbReference type="HAMAP" id="MF_03049">
    <property type="entry name" value="MOCS3_Uba4"/>
    <property type="match status" value="1"/>
</dbReference>
<dbReference type="InterPro" id="IPR028885">
    <property type="entry name" value="MOCS3/Uba4"/>
</dbReference>
<dbReference type="InterPro" id="IPR001763">
    <property type="entry name" value="Rhodanese-like_dom"/>
</dbReference>
<dbReference type="InterPro" id="IPR036873">
    <property type="entry name" value="Rhodanese-like_dom_sf"/>
</dbReference>
<dbReference type="InterPro" id="IPR045886">
    <property type="entry name" value="ThiF/MoeB/HesA"/>
</dbReference>
<dbReference type="InterPro" id="IPR000594">
    <property type="entry name" value="ThiF_NAD_FAD-bd"/>
</dbReference>
<dbReference type="InterPro" id="IPR035985">
    <property type="entry name" value="Ubiquitin-activating_enz"/>
</dbReference>
<dbReference type="NCBIfam" id="NF004281">
    <property type="entry name" value="PRK05690.1"/>
    <property type="match status" value="1"/>
</dbReference>
<dbReference type="PANTHER" id="PTHR10953:SF102">
    <property type="entry name" value="ADENYLYLTRANSFERASE AND SULFURTRANSFERASE MOCS3"/>
    <property type="match status" value="1"/>
</dbReference>
<dbReference type="PANTHER" id="PTHR10953">
    <property type="entry name" value="UBIQUITIN-ACTIVATING ENZYME E1"/>
    <property type="match status" value="1"/>
</dbReference>
<dbReference type="Pfam" id="PF00581">
    <property type="entry name" value="Rhodanese"/>
    <property type="match status" value="1"/>
</dbReference>
<dbReference type="Pfam" id="PF00899">
    <property type="entry name" value="ThiF"/>
    <property type="match status" value="1"/>
</dbReference>
<dbReference type="SMART" id="SM00450">
    <property type="entry name" value="RHOD"/>
    <property type="match status" value="1"/>
</dbReference>
<dbReference type="SUPFAM" id="SSF69572">
    <property type="entry name" value="Activating enzymes of the ubiquitin-like proteins"/>
    <property type="match status" value="1"/>
</dbReference>
<dbReference type="PROSITE" id="PS50206">
    <property type="entry name" value="RHODANESE_3"/>
    <property type="match status" value="1"/>
</dbReference>